<proteinExistence type="inferred from homology"/>
<dbReference type="EC" id="2.7.7.8" evidence="1"/>
<dbReference type="EMBL" id="CP000468">
    <property type="protein sequence ID" value="ABJ02659.1"/>
    <property type="status" value="ALT_INIT"/>
    <property type="molecule type" value="Genomic_DNA"/>
</dbReference>
<dbReference type="RefSeq" id="WP_001298330.1">
    <property type="nucleotide sequence ID" value="NZ_CADILS010000003.1"/>
</dbReference>
<dbReference type="SMR" id="A1AG69"/>
<dbReference type="KEGG" id="ecv:APECO1_3266"/>
<dbReference type="HOGENOM" id="CLU_004217_2_2_6"/>
<dbReference type="Proteomes" id="UP000008216">
    <property type="component" value="Chromosome"/>
</dbReference>
<dbReference type="GO" id="GO:0005829">
    <property type="term" value="C:cytosol"/>
    <property type="evidence" value="ECO:0007669"/>
    <property type="project" value="TreeGrafter"/>
</dbReference>
<dbReference type="GO" id="GO:0000175">
    <property type="term" value="F:3'-5'-RNA exonuclease activity"/>
    <property type="evidence" value="ECO:0007669"/>
    <property type="project" value="TreeGrafter"/>
</dbReference>
<dbReference type="GO" id="GO:0000287">
    <property type="term" value="F:magnesium ion binding"/>
    <property type="evidence" value="ECO:0007669"/>
    <property type="project" value="UniProtKB-UniRule"/>
</dbReference>
<dbReference type="GO" id="GO:0004654">
    <property type="term" value="F:polyribonucleotide nucleotidyltransferase activity"/>
    <property type="evidence" value="ECO:0007669"/>
    <property type="project" value="UniProtKB-UniRule"/>
</dbReference>
<dbReference type="GO" id="GO:0003723">
    <property type="term" value="F:RNA binding"/>
    <property type="evidence" value="ECO:0007669"/>
    <property type="project" value="UniProtKB-UniRule"/>
</dbReference>
<dbReference type="GO" id="GO:0006402">
    <property type="term" value="P:mRNA catabolic process"/>
    <property type="evidence" value="ECO:0007669"/>
    <property type="project" value="UniProtKB-UniRule"/>
</dbReference>
<dbReference type="GO" id="GO:0006396">
    <property type="term" value="P:RNA processing"/>
    <property type="evidence" value="ECO:0007669"/>
    <property type="project" value="InterPro"/>
</dbReference>
<dbReference type="CDD" id="cd02393">
    <property type="entry name" value="KH-I_PNPase"/>
    <property type="match status" value="1"/>
</dbReference>
<dbReference type="CDD" id="cd11363">
    <property type="entry name" value="RNase_PH_PNPase_1"/>
    <property type="match status" value="1"/>
</dbReference>
<dbReference type="CDD" id="cd11364">
    <property type="entry name" value="RNase_PH_PNPase_2"/>
    <property type="match status" value="1"/>
</dbReference>
<dbReference type="CDD" id="cd04472">
    <property type="entry name" value="S1_PNPase"/>
    <property type="match status" value="1"/>
</dbReference>
<dbReference type="FunFam" id="2.40.50.140:FF:000023">
    <property type="entry name" value="Polyribonucleotide nucleotidyltransferase"/>
    <property type="match status" value="1"/>
</dbReference>
<dbReference type="FunFam" id="3.30.1370.10:FF:000001">
    <property type="entry name" value="Polyribonucleotide nucleotidyltransferase"/>
    <property type="match status" value="1"/>
</dbReference>
<dbReference type="FunFam" id="3.30.230.70:FF:000001">
    <property type="entry name" value="Polyribonucleotide nucleotidyltransferase"/>
    <property type="match status" value="1"/>
</dbReference>
<dbReference type="FunFam" id="3.30.230.70:FF:000002">
    <property type="entry name" value="Polyribonucleotide nucleotidyltransferase"/>
    <property type="match status" value="1"/>
</dbReference>
<dbReference type="Gene3D" id="3.30.230.70">
    <property type="entry name" value="GHMP Kinase, N-terminal domain"/>
    <property type="match status" value="2"/>
</dbReference>
<dbReference type="Gene3D" id="3.30.1370.10">
    <property type="entry name" value="K Homology domain, type 1"/>
    <property type="match status" value="1"/>
</dbReference>
<dbReference type="Gene3D" id="2.40.50.140">
    <property type="entry name" value="Nucleic acid-binding proteins"/>
    <property type="match status" value="1"/>
</dbReference>
<dbReference type="HAMAP" id="MF_01595">
    <property type="entry name" value="PNPase"/>
    <property type="match status" value="1"/>
</dbReference>
<dbReference type="InterPro" id="IPR001247">
    <property type="entry name" value="ExoRNase_PH_dom1"/>
</dbReference>
<dbReference type="InterPro" id="IPR015847">
    <property type="entry name" value="ExoRNase_PH_dom2"/>
</dbReference>
<dbReference type="InterPro" id="IPR036345">
    <property type="entry name" value="ExoRNase_PH_dom2_sf"/>
</dbReference>
<dbReference type="InterPro" id="IPR004087">
    <property type="entry name" value="KH_dom"/>
</dbReference>
<dbReference type="InterPro" id="IPR004088">
    <property type="entry name" value="KH_dom_type_1"/>
</dbReference>
<dbReference type="InterPro" id="IPR036612">
    <property type="entry name" value="KH_dom_type_1_sf"/>
</dbReference>
<dbReference type="InterPro" id="IPR012340">
    <property type="entry name" value="NA-bd_OB-fold"/>
</dbReference>
<dbReference type="InterPro" id="IPR012162">
    <property type="entry name" value="PNPase"/>
</dbReference>
<dbReference type="InterPro" id="IPR027408">
    <property type="entry name" value="PNPase/RNase_PH_dom_sf"/>
</dbReference>
<dbReference type="InterPro" id="IPR015848">
    <property type="entry name" value="PNPase_PH_RNA-bd_bac/org-type"/>
</dbReference>
<dbReference type="InterPro" id="IPR036456">
    <property type="entry name" value="PNPase_PH_RNA-bd_sf"/>
</dbReference>
<dbReference type="InterPro" id="IPR020568">
    <property type="entry name" value="Ribosomal_Su5_D2-typ_SF"/>
</dbReference>
<dbReference type="InterPro" id="IPR003029">
    <property type="entry name" value="S1_domain"/>
</dbReference>
<dbReference type="NCBIfam" id="TIGR03591">
    <property type="entry name" value="polynuc_phos"/>
    <property type="match status" value="1"/>
</dbReference>
<dbReference type="NCBIfam" id="NF008805">
    <property type="entry name" value="PRK11824.1"/>
    <property type="match status" value="1"/>
</dbReference>
<dbReference type="PANTHER" id="PTHR11252">
    <property type="entry name" value="POLYRIBONUCLEOTIDE NUCLEOTIDYLTRANSFERASE"/>
    <property type="match status" value="1"/>
</dbReference>
<dbReference type="PANTHER" id="PTHR11252:SF0">
    <property type="entry name" value="POLYRIBONUCLEOTIDE NUCLEOTIDYLTRANSFERASE 1, MITOCHONDRIAL"/>
    <property type="match status" value="1"/>
</dbReference>
<dbReference type="Pfam" id="PF00013">
    <property type="entry name" value="KH_1"/>
    <property type="match status" value="1"/>
</dbReference>
<dbReference type="Pfam" id="PF03726">
    <property type="entry name" value="PNPase"/>
    <property type="match status" value="1"/>
</dbReference>
<dbReference type="Pfam" id="PF01138">
    <property type="entry name" value="RNase_PH"/>
    <property type="match status" value="2"/>
</dbReference>
<dbReference type="Pfam" id="PF03725">
    <property type="entry name" value="RNase_PH_C"/>
    <property type="match status" value="2"/>
</dbReference>
<dbReference type="Pfam" id="PF00575">
    <property type="entry name" value="S1"/>
    <property type="match status" value="1"/>
</dbReference>
<dbReference type="PIRSF" id="PIRSF005499">
    <property type="entry name" value="PNPase"/>
    <property type="match status" value="1"/>
</dbReference>
<dbReference type="SMART" id="SM00322">
    <property type="entry name" value="KH"/>
    <property type="match status" value="1"/>
</dbReference>
<dbReference type="SMART" id="SM00316">
    <property type="entry name" value="S1"/>
    <property type="match status" value="1"/>
</dbReference>
<dbReference type="SUPFAM" id="SSF54791">
    <property type="entry name" value="Eukaryotic type KH-domain (KH-domain type I)"/>
    <property type="match status" value="1"/>
</dbReference>
<dbReference type="SUPFAM" id="SSF50249">
    <property type="entry name" value="Nucleic acid-binding proteins"/>
    <property type="match status" value="1"/>
</dbReference>
<dbReference type="SUPFAM" id="SSF46915">
    <property type="entry name" value="Polynucleotide phosphorylase/guanosine pentaphosphate synthase (PNPase/GPSI), domain 3"/>
    <property type="match status" value="1"/>
</dbReference>
<dbReference type="SUPFAM" id="SSF55666">
    <property type="entry name" value="Ribonuclease PH domain 2-like"/>
    <property type="match status" value="2"/>
</dbReference>
<dbReference type="SUPFAM" id="SSF54211">
    <property type="entry name" value="Ribosomal protein S5 domain 2-like"/>
    <property type="match status" value="2"/>
</dbReference>
<dbReference type="PROSITE" id="PS50084">
    <property type="entry name" value="KH_TYPE_1"/>
    <property type="match status" value="1"/>
</dbReference>
<dbReference type="PROSITE" id="PS50126">
    <property type="entry name" value="S1"/>
    <property type="match status" value="1"/>
</dbReference>
<protein>
    <recommendedName>
        <fullName evidence="1">Polyribonucleotide nucleotidyltransferase</fullName>
        <ecNumber evidence="1">2.7.7.8</ecNumber>
    </recommendedName>
    <alternativeName>
        <fullName evidence="1">Polynucleotide phosphorylase</fullName>
        <shortName evidence="1">PNPase</shortName>
    </alternativeName>
</protein>
<sequence length="711" mass="77115">MLNPIVRKFQYGQHTVTLETGMMARQATAAVMVSMDDTAVFVTVVGQKKAKPGQDFFPLTVNYQERTYAAGRIPGSFFRREGRPSEGETLIARLIDRPIRPLFPEGFVNEVQVIATVVSVNPQVNPDIVAMIGASAALSLSGIPFNGPIGAARVGYINDQYVLNPTQDELKESKLDLVVAGTEAAVLMVESEAELLSEDQMLGAVVFGHEQQQVVIQNINELVKEAGKPRWDWQPEPVNEALNARVAALAEARLSDAYRITDKQERYAQVDVIKSETIATLLAEDETLDENELGEILHAIEKNVVRSRVLAGEPRIDGREKDMIRGLDVRTGVLPRTHGSALFTRGETQALVTATLGTARDAQVLDELMGERTDTFLFHYNFPPYSVGETGMVGSPKRREIGHGRLAKRGVLAVMPDMDKFPYTVRVVSEITESNGSSSMASVCGASLALMDAGVPIKAAVAGIAMGLVKEGDNYVVLSDILGDEDHLGDMDFKVAGSRDGISALQMDIKIEGITKEIMQVALNQAKGARLHILGVMEQAINAPRGDISEFAPRIHTIKINPDKIKDVIGKGGSVIRALTEETGTTIEIEDDGTVKIAATDGEKAKHAIRRIEEITAEIEVGRVYNGKVTRIVDFGAFVAIGGGKEGLVHISQIADKRVEKVTDYLQMGQEVPVKVLEVDRQGRIRLSIKEATEQSQPAAAPEAPAAEQGE</sequence>
<organism>
    <name type="scientific">Escherichia coli O1:K1 / APEC</name>
    <dbReference type="NCBI Taxonomy" id="405955"/>
    <lineage>
        <taxon>Bacteria</taxon>
        <taxon>Pseudomonadati</taxon>
        <taxon>Pseudomonadota</taxon>
        <taxon>Gammaproteobacteria</taxon>
        <taxon>Enterobacterales</taxon>
        <taxon>Enterobacteriaceae</taxon>
        <taxon>Escherichia</taxon>
    </lineage>
</organism>
<comment type="function">
    <text evidence="1">Involved in mRNA degradation. Catalyzes the phosphorolysis of single-stranded polyribonucleotides processively in the 3'- to 5'-direction.</text>
</comment>
<comment type="catalytic activity">
    <reaction evidence="1">
        <text>RNA(n+1) + phosphate = RNA(n) + a ribonucleoside 5'-diphosphate</text>
        <dbReference type="Rhea" id="RHEA:22096"/>
        <dbReference type="Rhea" id="RHEA-COMP:14527"/>
        <dbReference type="Rhea" id="RHEA-COMP:17342"/>
        <dbReference type="ChEBI" id="CHEBI:43474"/>
        <dbReference type="ChEBI" id="CHEBI:57930"/>
        <dbReference type="ChEBI" id="CHEBI:140395"/>
        <dbReference type="EC" id="2.7.7.8"/>
    </reaction>
</comment>
<comment type="cofactor">
    <cofactor evidence="1">
        <name>Mg(2+)</name>
        <dbReference type="ChEBI" id="CHEBI:18420"/>
    </cofactor>
</comment>
<comment type="subunit">
    <text evidence="1">Component of the RNA degradosome, which is a multiprotein complex involved in RNA processing and mRNA degradation.</text>
</comment>
<comment type="subcellular location">
    <subcellularLocation>
        <location evidence="1">Cytoplasm</location>
    </subcellularLocation>
</comment>
<comment type="similarity">
    <text evidence="1">Belongs to the polyribonucleotide nucleotidyltransferase family.</text>
</comment>
<comment type="sequence caution" evidence="3">
    <conflict type="erroneous initiation">
        <sequence resource="EMBL-CDS" id="ABJ02659"/>
    </conflict>
</comment>
<accession>A1AG69</accession>
<reference key="1">
    <citation type="journal article" date="2007" name="J. Bacteriol.">
        <title>The genome sequence of avian pathogenic Escherichia coli strain O1:K1:H7 shares strong similarities with human extraintestinal pathogenic E. coli genomes.</title>
        <authorList>
            <person name="Johnson T.J."/>
            <person name="Kariyawasam S."/>
            <person name="Wannemuehler Y."/>
            <person name="Mangiamele P."/>
            <person name="Johnson S.J."/>
            <person name="Doetkott C."/>
            <person name="Skyberg J.A."/>
            <person name="Lynne A.M."/>
            <person name="Johnson J.R."/>
            <person name="Nolan L.K."/>
        </authorList>
    </citation>
    <scope>NUCLEOTIDE SEQUENCE [LARGE SCALE GENOMIC DNA]</scope>
</reference>
<evidence type="ECO:0000255" key="1">
    <source>
        <dbReference type="HAMAP-Rule" id="MF_01595"/>
    </source>
</evidence>
<evidence type="ECO:0000256" key="2">
    <source>
        <dbReference type="SAM" id="MobiDB-lite"/>
    </source>
</evidence>
<evidence type="ECO:0000305" key="3"/>
<name>PNP_ECOK1</name>
<gene>
    <name evidence="1" type="primary">pnp</name>
    <name type="ordered locus">Ecok1_31650</name>
    <name type="ORF">APECO1_3266</name>
</gene>
<feature type="chain" id="PRO_0000329642" description="Polyribonucleotide nucleotidyltransferase">
    <location>
        <begin position="1"/>
        <end position="711"/>
    </location>
</feature>
<feature type="domain" description="KH" evidence="1">
    <location>
        <begin position="553"/>
        <end position="612"/>
    </location>
</feature>
<feature type="domain" description="S1 motif" evidence="1">
    <location>
        <begin position="622"/>
        <end position="690"/>
    </location>
</feature>
<feature type="region of interest" description="Disordered" evidence="2">
    <location>
        <begin position="689"/>
        <end position="711"/>
    </location>
</feature>
<feature type="compositionally biased region" description="Low complexity" evidence="2">
    <location>
        <begin position="694"/>
        <end position="711"/>
    </location>
</feature>
<feature type="binding site" evidence="1">
    <location>
        <position position="486"/>
    </location>
    <ligand>
        <name>Mg(2+)</name>
        <dbReference type="ChEBI" id="CHEBI:18420"/>
    </ligand>
</feature>
<feature type="binding site" evidence="1">
    <location>
        <position position="492"/>
    </location>
    <ligand>
        <name>Mg(2+)</name>
        <dbReference type="ChEBI" id="CHEBI:18420"/>
    </ligand>
</feature>
<keyword id="KW-0963">Cytoplasm</keyword>
<keyword id="KW-0460">Magnesium</keyword>
<keyword id="KW-0479">Metal-binding</keyword>
<keyword id="KW-0548">Nucleotidyltransferase</keyword>
<keyword id="KW-1185">Reference proteome</keyword>
<keyword id="KW-0694">RNA-binding</keyword>
<keyword id="KW-0808">Transferase</keyword>